<name>PPNP_PSE14</name>
<sequence length="93" mass="10344">MFKVNEYFDGTVKSIAFSQVDGQATIGVMAAGEYEFGTAQREIMHVISGELNVKLPDSTDWETFSTGSQFNVPANSKFQLKVSVDTAYLCEYR</sequence>
<proteinExistence type="inferred from homology"/>
<gene>
    <name evidence="1" type="primary">ppnP</name>
    <name type="ordered locus">PSPPH_1791</name>
</gene>
<comment type="function">
    <text evidence="1">Catalyzes the phosphorolysis of diverse nucleosides, yielding D-ribose 1-phosphate and the respective free bases. Can use uridine, adenosine, guanosine, cytidine, thymidine, inosine and xanthosine as substrates. Also catalyzes the reverse reactions.</text>
</comment>
<comment type="catalytic activity">
    <reaction evidence="1">
        <text>a purine D-ribonucleoside + phosphate = a purine nucleobase + alpha-D-ribose 1-phosphate</text>
        <dbReference type="Rhea" id="RHEA:19805"/>
        <dbReference type="ChEBI" id="CHEBI:26386"/>
        <dbReference type="ChEBI" id="CHEBI:43474"/>
        <dbReference type="ChEBI" id="CHEBI:57720"/>
        <dbReference type="ChEBI" id="CHEBI:142355"/>
        <dbReference type="EC" id="2.4.2.1"/>
    </reaction>
</comment>
<comment type="catalytic activity">
    <reaction evidence="1">
        <text>adenosine + phosphate = alpha-D-ribose 1-phosphate + adenine</text>
        <dbReference type="Rhea" id="RHEA:27642"/>
        <dbReference type="ChEBI" id="CHEBI:16335"/>
        <dbReference type="ChEBI" id="CHEBI:16708"/>
        <dbReference type="ChEBI" id="CHEBI:43474"/>
        <dbReference type="ChEBI" id="CHEBI:57720"/>
        <dbReference type="EC" id="2.4.2.1"/>
    </reaction>
</comment>
<comment type="catalytic activity">
    <reaction evidence="1">
        <text>cytidine + phosphate = cytosine + alpha-D-ribose 1-phosphate</text>
        <dbReference type="Rhea" id="RHEA:52540"/>
        <dbReference type="ChEBI" id="CHEBI:16040"/>
        <dbReference type="ChEBI" id="CHEBI:17562"/>
        <dbReference type="ChEBI" id="CHEBI:43474"/>
        <dbReference type="ChEBI" id="CHEBI:57720"/>
        <dbReference type="EC" id="2.4.2.2"/>
    </reaction>
</comment>
<comment type="catalytic activity">
    <reaction evidence="1">
        <text>guanosine + phosphate = alpha-D-ribose 1-phosphate + guanine</text>
        <dbReference type="Rhea" id="RHEA:13233"/>
        <dbReference type="ChEBI" id="CHEBI:16235"/>
        <dbReference type="ChEBI" id="CHEBI:16750"/>
        <dbReference type="ChEBI" id="CHEBI:43474"/>
        <dbReference type="ChEBI" id="CHEBI:57720"/>
        <dbReference type="EC" id="2.4.2.1"/>
    </reaction>
</comment>
<comment type="catalytic activity">
    <reaction evidence="1">
        <text>inosine + phosphate = alpha-D-ribose 1-phosphate + hypoxanthine</text>
        <dbReference type="Rhea" id="RHEA:27646"/>
        <dbReference type="ChEBI" id="CHEBI:17368"/>
        <dbReference type="ChEBI" id="CHEBI:17596"/>
        <dbReference type="ChEBI" id="CHEBI:43474"/>
        <dbReference type="ChEBI" id="CHEBI:57720"/>
        <dbReference type="EC" id="2.4.2.1"/>
    </reaction>
</comment>
<comment type="catalytic activity">
    <reaction evidence="1">
        <text>thymidine + phosphate = 2-deoxy-alpha-D-ribose 1-phosphate + thymine</text>
        <dbReference type="Rhea" id="RHEA:16037"/>
        <dbReference type="ChEBI" id="CHEBI:17748"/>
        <dbReference type="ChEBI" id="CHEBI:17821"/>
        <dbReference type="ChEBI" id="CHEBI:43474"/>
        <dbReference type="ChEBI" id="CHEBI:57259"/>
        <dbReference type="EC" id="2.4.2.2"/>
    </reaction>
</comment>
<comment type="catalytic activity">
    <reaction evidence="1">
        <text>uridine + phosphate = alpha-D-ribose 1-phosphate + uracil</text>
        <dbReference type="Rhea" id="RHEA:24388"/>
        <dbReference type="ChEBI" id="CHEBI:16704"/>
        <dbReference type="ChEBI" id="CHEBI:17568"/>
        <dbReference type="ChEBI" id="CHEBI:43474"/>
        <dbReference type="ChEBI" id="CHEBI:57720"/>
        <dbReference type="EC" id="2.4.2.2"/>
    </reaction>
</comment>
<comment type="catalytic activity">
    <reaction evidence="1">
        <text>xanthosine + phosphate = alpha-D-ribose 1-phosphate + xanthine</text>
        <dbReference type="Rhea" id="RHEA:27638"/>
        <dbReference type="ChEBI" id="CHEBI:17712"/>
        <dbReference type="ChEBI" id="CHEBI:18107"/>
        <dbReference type="ChEBI" id="CHEBI:43474"/>
        <dbReference type="ChEBI" id="CHEBI:57720"/>
        <dbReference type="EC" id="2.4.2.1"/>
    </reaction>
</comment>
<comment type="similarity">
    <text evidence="1">Belongs to the nucleoside phosphorylase PpnP family.</text>
</comment>
<reference key="1">
    <citation type="journal article" date="2005" name="J. Bacteriol.">
        <title>Whole-genome sequence analysis of Pseudomonas syringae pv. phaseolicola 1448A reveals divergence among pathovars in genes involved in virulence and transposition.</title>
        <authorList>
            <person name="Joardar V."/>
            <person name="Lindeberg M."/>
            <person name="Jackson R.W."/>
            <person name="Selengut J."/>
            <person name="Dodson R."/>
            <person name="Brinkac L.M."/>
            <person name="Daugherty S.C."/>
            <person name="DeBoy R.T."/>
            <person name="Durkin A.S."/>
            <person name="Gwinn Giglio M."/>
            <person name="Madupu R."/>
            <person name="Nelson W.C."/>
            <person name="Rosovitz M.J."/>
            <person name="Sullivan S.A."/>
            <person name="Crabtree J."/>
            <person name="Creasy T."/>
            <person name="Davidsen T.M."/>
            <person name="Haft D.H."/>
            <person name="Zafar N."/>
            <person name="Zhou L."/>
            <person name="Halpin R."/>
            <person name="Holley T."/>
            <person name="Khouri H.M."/>
            <person name="Feldblyum T.V."/>
            <person name="White O."/>
            <person name="Fraser C.M."/>
            <person name="Chatterjee A.K."/>
            <person name="Cartinhour S."/>
            <person name="Schneider D."/>
            <person name="Mansfield J.W."/>
            <person name="Collmer A."/>
            <person name="Buell R."/>
        </authorList>
    </citation>
    <scope>NUCLEOTIDE SEQUENCE [LARGE SCALE GENOMIC DNA]</scope>
    <source>
        <strain>1448A / Race 6</strain>
    </source>
</reference>
<protein>
    <recommendedName>
        <fullName evidence="1">Pyrimidine/purine nucleoside phosphorylase</fullName>
        <ecNumber evidence="1">2.4.2.1</ecNumber>
        <ecNumber evidence="1">2.4.2.2</ecNumber>
    </recommendedName>
    <alternativeName>
        <fullName evidence="1">Adenosine phosphorylase</fullName>
    </alternativeName>
    <alternativeName>
        <fullName evidence="1">Cytidine phosphorylase</fullName>
    </alternativeName>
    <alternativeName>
        <fullName evidence="1">Guanosine phosphorylase</fullName>
    </alternativeName>
    <alternativeName>
        <fullName evidence="1">Inosine phosphorylase</fullName>
    </alternativeName>
    <alternativeName>
        <fullName evidence="1">Thymidine phosphorylase</fullName>
    </alternativeName>
    <alternativeName>
        <fullName evidence="1">Uridine phosphorylase</fullName>
    </alternativeName>
    <alternativeName>
        <fullName evidence="1">Xanthosine phosphorylase</fullName>
    </alternativeName>
</protein>
<evidence type="ECO:0000255" key="1">
    <source>
        <dbReference type="HAMAP-Rule" id="MF_01537"/>
    </source>
</evidence>
<accession>Q48KQ0</accession>
<organism>
    <name type="scientific">Pseudomonas savastanoi pv. phaseolicola (strain 1448A / Race 6)</name>
    <name type="common">Pseudomonas syringae pv. phaseolicola (strain 1448A / Race 6)</name>
    <dbReference type="NCBI Taxonomy" id="264730"/>
    <lineage>
        <taxon>Bacteria</taxon>
        <taxon>Pseudomonadati</taxon>
        <taxon>Pseudomonadota</taxon>
        <taxon>Gammaproteobacteria</taxon>
        <taxon>Pseudomonadales</taxon>
        <taxon>Pseudomonadaceae</taxon>
        <taxon>Pseudomonas</taxon>
    </lineage>
</organism>
<feature type="chain" id="PRO_0000298713" description="Pyrimidine/purine nucleoside phosphorylase">
    <location>
        <begin position="1"/>
        <end position="93"/>
    </location>
</feature>
<keyword id="KW-0328">Glycosyltransferase</keyword>
<keyword id="KW-0808">Transferase</keyword>
<dbReference type="EC" id="2.4.2.1" evidence="1"/>
<dbReference type="EC" id="2.4.2.2" evidence="1"/>
<dbReference type="EMBL" id="CP000058">
    <property type="protein sequence ID" value="AAZ34394.1"/>
    <property type="molecule type" value="Genomic_DNA"/>
</dbReference>
<dbReference type="RefSeq" id="WP_004658419.1">
    <property type="nucleotide sequence ID" value="NC_005773.3"/>
</dbReference>
<dbReference type="SMR" id="Q48KQ0"/>
<dbReference type="KEGG" id="psp:PSPPH_1791"/>
<dbReference type="eggNOG" id="COG3123">
    <property type="taxonomic scope" value="Bacteria"/>
</dbReference>
<dbReference type="HOGENOM" id="CLU_157874_0_0_6"/>
<dbReference type="Proteomes" id="UP000000551">
    <property type="component" value="Chromosome"/>
</dbReference>
<dbReference type="GO" id="GO:0005829">
    <property type="term" value="C:cytosol"/>
    <property type="evidence" value="ECO:0007669"/>
    <property type="project" value="TreeGrafter"/>
</dbReference>
<dbReference type="GO" id="GO:0047975">
    <property type="term" value="F:guanosine phosphorylase activity"/>
    <property type="evidence" value="ECO:0007669"/>
    <property type="project" value="UniProtKB-EC"/>
</dbReference>
<dbReference type="GO" id="GO:0004731">
    <property type="term" value="F:purine-nucleoside phosphorylase activity"/>
    <property type="evidence" value="ECO:0007669"/>
    <property type="project" value="UniProtKB-UniRule"/>
</dbReference>
<dbReference type="GO" id="GO:0009032">
    <property type="term" value="F:thymidine phosphorylase activity"/>
    <property type="evidence" value="ECO:0007669"/>
    <property type="project" value="UniProtKB-EC"/>
</dbReference>
<dbReference type="GO" id="GO:0004850">
    <property type="term" value="F:uridine phosphorylase activity"/>
    <property type="evidence" value="ECO:0007669"/>
    <property type="project" value="UniProtKB-EC"/>
</dbReference>
<dbReference type="CDD" id="cd20296">
    <property type="entry name" value="cupin_PpnP-like"/>
    <property type="match status" value="1"/>
</dbReference>
<dbReference type="FunFam" id="2.60.120.10:FF:000016">
    <property type="entry name" value="Pyrimidine/purine nucleoside phosphorylase"/>
    <property type="match status" value="1"/>
</dbReference>
<dbReference type="Gene3D" id="2.60.120.10">
    <property type="entry name" value="Jelly Rolls"/>
    <property type="match status" value="1"/>
</dbReference>
<dbReference type="HAMAP" id="MF_01537">
    <property type="entry name" value="Nucleos_phosphorylase_PpnP"/>
    <property type="match status" value="1"/>
</dbReference>
<dbReference type="InterPro" id="IPR009664">
    <property type="entry name" value="Ppnp"/>
</dbReference>
<dbReference type="InterPro" id="IPR014710">
    <property type="entry name" value="RmlC-like_jellyroll"/>
</dbReference>
<dbReference type="InterPro" id="IPR011051">
    <property type="entry name" value="RmlC_Cupin_sf"/>
</dbReference>
<dbReference type="PANTHER" id="PTHR36540">
    <property type="entry name" value="PYRIMIDINE/PURINE NUCLEOSIDE PHOSPHORYLASE"/>
    <property type="match status" value="1"/>
</dbReference>
<dbReference type="PANTHER" id="PTHR36540:SF1">
    <property type="entry name" value="PYRIMIDINE_PURINE NUCLEOSIDE PHOSPHORYLASE"/>
    <property type="match status" value="1"/>
</dbReference>
<dbReference type="Pfam" id="PF06865">
    <property type="entry name" value="Ppnp"/>
    <property type="match status" value="1"/>
</dbReference>
<dbReference type="SUPFAM" id="SSF51182">
    <property type="entry name" value="RmlC-like cupins"/>
    <property type="match status" value="1"/>
</dbReference>